<proteinExistence type="inferred from homology"/>
<name>RL10_LEPIN</name>
<organism>
    <name type="scientific">Leptospira interrogans serogroup Icterohaemorrhagiae serovar Lai (strain 56601)</name>
    <dbReference type="NCBI Taxonomy" id="189518"/>
    <lineage>
        <taxon>Bacteria</taxon>
        <taxon>Pseudomonadati</taxon>
        <taxon>Spirochaetota</taxon>
        <taxon>Spirochaetia</taxon>
        <taxon>Leptospirales</taxon>
        <taxon>Leptospiraceae</taxon>
        <taxon>Leptospira</taxon>
    </lineage>
</organism>
<dbReference type="EMBL" id="AE010300">
    <property type="protein sequence ID" value="AAN50620.1"/>
    <property type="molecule type" value="Genomic_DNA"/>
</dbReference>
<dbReference type="RefSeq" id="NP_713602.1">
    <property type="nucleotide sequence ID" value="NC_004342.2"/>
</dbReference>
<dbReference type="RefSeq" id="WP_000013204.1">
    <property type="nucleotide sequence ID" value="NC_004342.2"/>
</dbReference>
<dbReference type="SMR" id="Q8F0S0"/>
<dbReference type="FunCoup" id="Q8F0S0">
    <property type="interactions" value="502"/>
</dbReference>
<dbReference type="STRING" id="189518.LA_3422"/>
<dbReference type="PaxDb" id="189518-LA_3422"/>
<dbReference type="EnsemblBacteria" id="AAN50620">
    <property type="protein sequence ID" value="AAN50620"/>
    <property type="gene ID" value="LA_3422"/>
</dbReference>
<dbReference type="GeneID" id="61144091"/>
<dbReference type="KEGG" id="lil:LA_3422"/>
<dbReference type="PATRIC" id="fig|189518.3.peg.3387"/>
<dbReference type="HOGENOM" id="CLU_092227_1_1_12"/>
<dbReference type="InParanoid" id="Q8F0S0"/>
<dbReference type="OrthoDB" id="9808307at2"/>
<dbReference type="Proteomes" id="UP000001408">
    <property type="component" value="Chromosome I"/>
</dbReference>
<dbReference type="GO" id="GO:0022625">
    <property type="term" value="C:cytosolic large ribosomal subunit"/>
    <property type="evidence" value="ECO:0000318"/>
    <property type="project" value="GO_Central"/>
</dbReference>
<dbReference type="GO" id="GO:0070180">
    <property type="term" value="F:large ribosomal subunit rRNA binding"/>
    <property type="evidence" value="ECO:0007669"/>
    <property type="project" value="UniProtKB-UniRule"/>
</dbReference>
<dbReference type="GO" id="GO:0003735">
    <property type="term" value="F:structural constituent of ribosome"/>
    <property type="evidence" value="ECO:0000318"/>
    <property type="project" value="GO_Central"/>
</dbReference>
<dbReference type="GO" id="GO:0006412">
    <property type="term" value="P:translation"/>
    <property type="evidence" value="ECO:0000318"/>
    <property type="project" value="GO_Central"/>
</dbReference>
<dbReference type="CDD" id="cd05797">
    <property type="entry name" value="Ribosomal_L10"/>
    <property type="match status" value="1"/>
</dbReference>
<dbReference type="FunFam" id="3.30.70.1730:FF:000010">
    <property type="entry name" value="50S ribosomal protein L10"/>
    <property type="match status" value="1"/>
</dbReference>
<dbReference type="Gene3D" id="3.30.70.1730">
    <property type="match status" value="1"/>
</dbReference>
<dbReference type="Gene3D" id="6.10.250.290">
    <property type="match status" value="1"/>
</dbReference>
<dbReference type="HAMAP" id="MF_00362">
    <property type="entry name" value="Ribosomal_uL10"/>
    <property type="match status" value="1"/>
</dbReference>
<dbReference type="InterPro" id="IPR001790">
    <property type="entry name" value="Ribosomal_uL10"/>
</dbReference>
<dbReference type="InterPro" id="IPR043141">
    <property type="entry name" value="Ribosomal_uL10-like_sf"/>
</dbReference>
<dbReference type="InterPro" id="IPR022973">
    <property type="entry name" value="Ribosomal_uL10_bac"/>
</dbReference>
<dbReference type="InterPro" id="IPR047865">
    <property type="entry name" value="Ribosomal_uL10_bac_type"/>
</dbReference>
<dbReference type="NCBIfam" id="NF000955">
    <property type="entry name" value="PRK00099.1-1"/>
    <property type="match status" value="1"/>
</dbReference>
<dbReference type="PANTHER" id="PTHR11560">
    <property type="entry name" value="39S RIBOSOMAL PROTEIN L10, MITOCHONDRIAL"/>
    <property type="match status" value="1"/>
</dbReference>
<dbReference type="Pfam" id="PF00466">
    <property type="entry name" value="Ribosomal_L10"/>
    <property type="match status" value="1"/>
</dbReference>
<dbReference type="SUPFAM" id="SSF160369">
    <property type="entry name" value="Ribosomal protein L10-like"/>
    <property type="match status" value="1"/>
</dbReference>
<protein>
    <recommendedName>
        <fullName evidence="1">Large ribosomal subunit protein uL10</fullName>
    </recommendedName>
    <alternativeName>
        <fullName evidence="2">50S ribosomal protein L10</fullName>
    </alternativeName>
</protein>
<gene>
    <name evidence="1" type="primary">rplJ</name>
    <name type="ordered locus">LA_3422</name>
</gene>
<accession>Q8F0S0</accession>
<keyword id="KW-1185">Reference proteome</keyword>
<keyword id="KW-0687">Ribonucleoprotein</keyword>
<keyword id="KW-0689">Ribosomal protein</keyword>
<keyword id="KW-0694">RNA-binding</keyword>
<keyword id="KW-0699">rRNA-binding</keyword>
<reference key="1">
    <citation type="journal article" date="2003" name="Nature">
        <title>Unique physiological and pathogenic features of Leptospira interrogans revealed by whole-genome sequencing.</title>
        <authorList>
            <person name="Ren S.-X."/>
            <person name="Fu G."/>
            <person name="Jiang X.-G."/>
            <person name="Zeng R."/>
            <person name="Miao Y.-G."/>
            <person name="Xu H."/>
            <person name="Zhang Y.-X."/>
            <person name="Xiong H."/>
            <person name="Lu G."/>
            <person name="Lu L.-F."/>
            <person name="Jiang H.-Q."/>
            <person name="Jia J."/>
            <person name="Tu Y.-F."/>
            <person name="Jiang J.-X."/>
            <person name="Gu W.-Y."/>
            <person name="Zhang Y.-Q."/>
            <person name="Cai Z."/>
            <person name="Sheng H.-H."/>
            <person name="Yin H.-F."/>
            <person name="Zhang Y."/>
            <person name="Zhu G.-F."/>
            <person name="Wan M."/>
            <person name="Huang H.-L."/>
            <person name="Qian Z."/>
            <person name="Wang S.-Y."/>
            <person name="Ma W."/>
            <person name="Yao Z.-J."/>
            <person name="Shen Y."/>
            <person name="Qiang B.-Q."/>
            <person name="Xia Q.-C."/>
            <person name="Guo X.-K."/>
            <person name="Danchin A."/>
            <person name="Saint Girons I."/>
            <person name="Somerville R.L."/>
            <person name="Wen Y.-M."/>
            <person name="Shi M.-H."/>
            <person name="Chen Z."/>
            <person name="Xu J.-G."/>
            <person name="Zhao G.-P."/>
        </authorList>
    </citation>
    <scope>NUCLEOTIDE SEQUENCE [LARGE SCALE GENOMIC DNA]</scope>
    <source>
        <strain>56601</strain>
    </source>
</reference>
<feature type="chain" id="PRO_0000154653" description="Large ribosomal subunit protein uL10">
    <location>
        <begin position="1"/>
        <end position="177"/>
    </location>
</feature>
<sequence>MANQEKIEAVALLKGKLETRNNFILACYSGLTVEEITGLRAQLRKEGSEMKVLKNNLFLRALKESGAHKDKNITFGSEYQGPLAAIFAKDNLPAIAKVCKDFAKNNKNLIVKAGYMDGSVLDANGVDAIAGLPSREQLLAQIAGGINGPARTIASGINQIIASLARAIQATAEKNNA</sequence>
<comment type="function">
    <text evidence="1">Forms part of the ribosomal stalk, playing a central role in the interaction of the ribosome with GTP-bound translation factors.</text>
</comment>
<comment type="subunit">
    <text evidence="1">Part of the ribosomal stalk of the 50S ribosomal subunit. The N-terminus interacts with L11 and the large rRNA to form the base of the stalk. The C-terminus forms an elongated spine to which L12 dimers bind in a sequential fashion forming a multimeric L10(L12)X complex.</text>
</comment>
<comment type="similarity">
    <text evidence="1">Belongs to the universal ribosomal protein uL10 family.</text>
</comment>
<evidence type="ECO:0000255" key="1">
    <source>
        <dbReference type="HAMAP-Rule" id="MF_00362"/>
    </source>
</evidence>
<evidence type="ECO:0000305" key="2"/>